<protein>
    <recommendedName>
        <fullName evidence="1">ATP synthase F(0) complex subunit 8</fullName>
    </recommendedName>
    <alternativeName>
        <fullName>A6L</fullName>
    </alternativeName>
    <alternativeName>
        <fullName>F-ATPase subunit 8</fullName>
    </alternativeName>
</protein>
<sequence length="67" mass="8063">MPQLDTTPWFITILSMIITLFILFQSNMSKYLYPLEPQPKTLKTQLYNAPWETKWTKIYLPHSLHLH</sequence>
<feature type="chain" id="PRO_0000195559" description="ATP synthase F(0) complex subunit 8">
    <location>
        <begin position="1"/>
        <end position="67"/>
    </location>
</feature>
<feature type="transmembrane region" description="Helical" evidence="4">
    <location>
        <begin position="8"/>
        <end position="24"/>
    </location>
</feature>
<feature type="modified residue" description="N6-acetyllysine; alternate" evidence="2">
    <location>
        <position position="54"/>
    </location>
</feature>
<feature type="modified residue" description="N6-succinyllysine; alternate" evidence="2">
    <location>
        <position position="54"/>
    </location>
</feature>
<feature type="modified residue" description="N6-acetyllysine" evidence="2">
    <location>
        <position position="57"/>
    </location>
</feature>
<evidence type="ECO:0000250" key="1">
    <source>
        <dbReference type="UniProtKB" id="P03928"/>
    </source>
</evidence>
<evidence type="ECO:0000250" key="2">
    <source>
        <dbReference type="UniProtKB" id="P03930"/>
    </source>
</evidence>
<evidence type="ECO:0000250" key="3">
    <source>
        <dbReference type="UniProtKB" id="P19483"/>
    </source>
</evidence>
<evidence type="ECO:0000255" key="4"/>
<evidence type="ECO:0000305" key="5"/>
<organism>
    <name type="scientific">Orycteropus afer</name>
    <name type="common">Aardvark</name>
    <dbReference type="NCBI Taxonomy" id="9818"/>
    <lineage>
        <taxon>Eukaryota</taxon>
        <taxon>Metazoa</taxon>
        <taxon>Chordata</taxon>
        <taxon>Craniata</taxon>
        <taxon>Vertebrata</taxon>
        <taxon>Euteleostomi</taxon>
        <taxon>Mammalia</taxon>
        <taxon>Eutheria</taxon>
        <taxon>Afrotheria</taxon>
        <taxon>Tubulidentata</taxon>
        <taxon>Orycteropodidae</taxon>
        <taxon>Orycteropus</taxon>
    </lineage>
</organism>
<keyword id="KW-0007">Acetylation</keyword>
<keyword id="KW-0066">ATP synthesis</keyword>
<keyword id="KW-0138">CF(0)</keyword>
<keyword id="KW-0375">Hydrogen ion transport</keyword>
<keyword id="KW-0406">Ion transport</keyword>
<keyword id="KW-0472">Membrane</keyword>
<keyword id="KW-0496">Mitochondrion</keyword>
<keyword id="KW-0812">Transmembrane</keyword>
<keyword id="KW-1133">Transmembrane helix</keyword>
<keyword id="KW-0813">Transport</keyword>
<name>ATP8_ORYAF</name>
<gene>
    <name evidence="1" type="primary">MT-ATP8</name>
    <name type="synonym">ATP8</name>
    <name type="synonym">ATPASE8</name>
    <name type="synonym">MTATP8</name>
</gene>
<geneLocation type="mitochondrion"/>
<dbReference type="EMBL" id="Y18475">
    <property type="protein sequence ID" value="CAB41625.1"/>
    <property type="molecule type" value="Genomic_DNA"/>
</dbReference>
<dbReference type="PIR" id="T11341">
    <property type="entry name" value="T11341"/>
</dbReference>
<dbReference type="RefSeq" id="NP_008579.1">
    <property type="nucleotide sequence ID" value="NC_002078.1"/>
</dbReference>
<dbReference type="SMR" id="Q9XMI9"/>
<dbReference type="GeneID" id="808413"/>
<dbReference type="CTD" id="4509"/>
<dbReference type="GO" id="GO:0031966">
    <property type="term" value="C:mitochondrial membrane"/>
    <property type="evidence" value="ECO:0007669"/>
    <property type="project" value="UniProtKB-SubCell"/>
</dbReference>
<dbReference type="GO" id="GO:0045259">
    <property type="term" value="C:proton-transporting ATP synthase complex"/>
    <property type="evidence" value="ECO:0000250"/>
    <property type="project" value="UniProtKB"/>
</dbReference>
<dbReference type="GO" id="GO:0015078">
    <property type="term" value="F:proton transmembrane transporter activity"/>
    <property type="evidence" value="ECO:0007669"/>
    <property type="project" value="InterPro"/>
</dbReference>
<dbReference type="GO" id="GO:0015986">
    <property type="term" value="P:proton motive force-driven ATP synthesis"/>
    <property type="evidence" value="ECO:0007669"/>
    <property type="project" value="InterPro"/>
</dbReference>
<dbReference type="InterPro" id="IPR039017">
    <property type="entry name" value="ATP8_mammal"/>
</dbReference>
<dbReference type="InterPro" id="IPR001421">
    <property type="entry name" value="ATP8_metazoa"/>
</dbReference>
<dbReference type="PANTHER" id="PTHR13722">
    <property type="entry name" value="ATP SYNTHASE PROTEIN 8"/>
    <property type="match status" value="1"/>
</dbReference>
<dbReference type="PANTHER" id="PTHR13722:SF0">
    <property type="entry name" value="ATP SYNTHASE PROTEIN 8"/>
    <property type="match status" value="1"/>
</dbReference>
<dbReference type="Pfam" id="PF00895">
    <property type="entry name" value="ATP-synt_8"/>
    <property type="match status" value="1"/>
</dbReference>
<reference key="1">
    <citation type="journal article" date="1999" name="Proc. R. Soc. B">
        <title>The mitochondrial DNA molecule of the aardvark, Orycteropus afer, and the position of the Tubulidentata in the eutherian tree.</title>
        <authorList>
            <person name="Arnason U."/>
            <person name="Gullberg A."/>
            <person name="Janke A."/>
        </authorList>
    </citation>
    <scope>NUCLEOTIDE SEQUENCE [GENOMIC DNA]</scope>
</reference>
<accession>Q9XMI9</accession>
<comment type="function">
    <text evidence="1 3">Subunit 8, of the mitochondrial membrane ATP synthase complex (F(1)F(0) ATP synthase or Complex V) that produces ATP from ADP in the presence of a proton gradient across the membrane which is generated by electron transport complexes of the respiratory chain. ATP synthase complex consist of a soluble F(1) head domain - the catalytic core - and a membrane F(1) domain - the membrane proton channel. These two domains are linked by a central stalk rotating inside the F(1) region and a stationary peripheral stalk. During catalysis, ATP synthesis in the catalytic domain of F(1) is coupled via a rotary mechanism of the central stalk subunits to proton translocation (By similarity). In vivo, can only synthesize ATP although its ATP hydrolase activity can be activated artificially in vitro (By similarity). Part of the complex F(0) domain (By similarity).</text>
</comment>
<comment type="subunit">
    <text evidence="1">Component of the ATP synthase complex composed at least of ATP5F1A/subunit alpha, ATP5F1B/subunit beta, ATP5MC1/subunit c (homooctomer), MT-ATP6/subunit a, MT-ATP8/subunit 8, ATP5ME/subunit e, ATP5MF/subunit f, ATP5MG/subunit g, ATP5MK/subunit k, ATP5MJ/subunit j, ATP5F1C/subunit gamma, ATP5F1D/subunit delta, ATP5F1E/subunit epsilon, ATP5PF/subunit F6, ATP5PB/subunit b, ATP5PD/subunit d, ATP5PO/subunit OSCP. ATP synthase complex consists of a soluble F(1) head domain (subunits alpha(3) and beta(3)) - the catalytic core - and a membrane F(0) domain - the membrane proton channel (subunits c, a, 8, e, f, g, k and j). These two domains are linked by a central stalk (subunits gamma, delta, and epsilon) rotating inside the F1 region and a stationary peripheral stalk (subunits F6, b, d, and OSCP). Interacts with PRICKLE3.</text>
</comment>
<comment type="subcellular location">
    <subcellularLocation>
        <location>Mitochondrion membrane</location>
        <topology>Single-pass membrane protein</topology>
    </subcellularLocation>
</comment>
<comment type="similarity">
    <text evidence="5">Belongs to the ATPase protein 8 family.</text>
</comment>
<proteinExistence type="inferred from homology"/>